<proteinExistence type="inferred from homology"/>
<sequence length="131" mass="14477">MKLAAFYKGRDLKKPSGGKKGRVRKTKKKALCGGPPQIPKLGERDLRLVERVTGGNLKVRVREVRYANVYIPKERRHVKAKILSILSTPANPDFARRNLIVKGAVIQTEVGRAVVTSRPGQDGVINAVLIE</sequence>
<protein>
    <recommendedName>
        <fullName evidence="1">Small ribosomal subunit protein eS8</fullName>
    </recommendedName>
    <alternativeName>
        <fullName evidence="3">30S ribosomal protein S8e</fullName>
    </alternativeName>
</protein>
<feature type="chain" id="PRO_0000304179" description="Small ribosomal subunit protein eS8">
    <location>
        <begin position="1"/>
        <end position="131"/>
    </location>
</feature>
<feature type="region of interest" description="Disordered" evidence="2">
    <location>
        <begin position="11"/>
        <end position="36"/>
    </location>
</feature>
<feature type="compositionally biased region" description="Basic residues" evidence="2">
    <location>
        <begin position="16"/>
        <end position="30"/>
    </location>
</feature>
<evidence type="ECO:0000255" key="1">
    <source>
        <dbReference type="HAMAP-Rule" id="MF_00029"/>
    </source>
</evidence>
<evidence type="ECO:0000256" key="2">
    <source>
        <dbReference type="SAM" id="MobiDB-lite"/>
    </source>
</evidence>
<evidence type="ECO:0000305" key="3"/>
<dbReference type="EMBL" id="CP000504">
    <property type="protein sequence ID" value="ABL87753.1"/>
    <property type="molecule type" value="Genomic_DNA"/>
</dbReference>
<dbReference type="RefSeq" id="WP_011762329.1">
    <property type="nucleotide sequence ID" value="NC_008701.1"/>
</dbReference>
<dbReference type="SMR" id="A1RS21"/>
<dbReference type="STRING" id="384616.Pisl_0575"/>
<dbReference type="GeneID" id="4616288"/>
<dbReference type="KEGG" id="pis:Pisl_0575"/>
<dbReference type="eggNOG" id="arCOG04154">
    <property type="taxonomic scope" value="Archaea"/>
</dbReference>
<dbReference type="HOGENOM" id="CLU_080597_2_1_2"/>
<dbReference type="OrthoDB" id="372305at2157"/>
<dbReference type="Proteomes" id="UP000002595">
    <property type="component" value="Chromosome"/>
</dbReference>
<dbReference type="GO" id="GO:1990904">
    <property type="term" value="C:ribonucleoprotein complex"/>
    <property type="evidence" value="ECO:0007669"/>
    <property type="project" value="UniProtKB-KW"/>
</dbReference>
<dbReference type="GO" id="GO:0005840">
    <property type="term" value="C:ribosome"/>
    <property type="evidence" value="ECO:0007669"/>
    <property type="project" value="UniProtKB-KW"/>
</dbReference>
<dbReference type="GO" id="GO:0003735">
    <property type="term" value="F:structural constituent of ribosome"/>
    <property type="evidence" value="ECO:0007669"/>
    <property type="project" value="InterPro"/>
</dbReference>
<dbReference type="GO" id="GO:0006412">
    <property type="term" value="P:translation"/>
    <property type="evidence" value="ECO:0007669"/>
    <property type="project" value="UniProtKB-UniRule"/>
</dbReference>
<dbReference type="CDD" id="cd11382">
    <property type="entry name" value="Ribosomal_S8e"/>
    <property type="match status" value="1"/>
</dbReference>
<dbReference type="FunFam" id="2.40.10.310:FF:000002">
    <property type="entry name" value="30S ribosomal protein S8e"/>
    <property type="match status" value="1"/>
</dbReference>
<dbReference type="Gene3D" id="2.40.10.310">
    <property type="match status" value="1"/>
</dbReference>
<dbReference type="HAMAP" id="MF_00029">
    <property type="entry name" value="Ribosomal_eS8"/>
    <property type="match status" value="1"/>
</dbReference>
<dbReference type="InterPro" id="IPR001047">
    <property type="entry name" value="Ribosomal_eS8"/>
</dbReference>
<dbReference type="InterPro" id="IPR020919">
    <property type="entry name" value="Ribosomal_protein_eS8_arc"/>
</dbReference>
<dbReference type="InterPro" id="IPR022309">
    <property type="entry name" value="Ribosomal_Se8/biogenesis_NSA2"/>
</dbReference>
<dbReference type="NCBIfam" id="TIGR00307">
    <property type="entry name" value="eS8"/>
    <property type="match status" value="1"/>
</dbReference>
<dbReference type="PANTHER" id="PTHR10394">
    <property type="entry name" value="40S RIBOSOMAL PROTEIN S8"/>
    <property type="match status" value="1"/>
</dbReference>
<dbReference type="Pfam" id="PF01201">
    <property type="entry name" value="Ribosomal_S8e"/>
    <property type="match status" value="1"/>
</dbReference>
<organism>
    <name type="scientific">Pyrobaculum islandicum (strain DSM 4184 / JCM 9189 / GEO3)</name>
    <dbReference type="NCBI Taxonomy" id="384616"/>
    <lineage>
        <taxon>Archaea</taxon>
        <taxon>Thermoproteota</taxon>
        <taxon>Thermoprotei</taxon>
        <taxon>Thermoproteales</taxon>
        <taxon>Thermoproteaceae</taxon>
        <taxon>Pyrobaculum</taxon>
    </lineage>
</organism>
<name>RS8E_PYRIL</name>
<reference key="1">
    <citation type="submission" date="2006-12" db="EMBL/GenBank/DDBJ databases">
        <title>Complete sequence of Pyrobaculum islandicum DSM 4184.</title>
        <authorList>
            <person name="Copeland A."/>
            <person name="Lucas S."/>
            <person name="Lapidus A."/>
            <person name="Barry K."/>
            <person name="Detter J.C."/>
            <person name="Glavina del Rio T."/>
            <person name="Dalin E."/>
            <person name="Tice H."/>
            <person name="Pitluck S."/>
            <person name="Meincke L."/>
            <person name="Brettin T."/>
            <person name="Bruce D."/>
            <person name="Han C."/>
            <person name="Tapia R."/>
            <person name="Gilna P."/>
            <person name="Schmutz J."/>
            <person name="Larimer F."/>
            <person name="Land M."/>
            <person name="Hauser L."/>
            <person name="Kyrpides N."/>
            <person name="Mikhailova N."/>
            <person name="Cozen A.E."/>
            <person name="Fitz-Gibbon S.T."/>
            <person name="House C.H."/>
            <person name="Saltikov C."/>
            <person name="Lowe T."/>
            <person name="Richardson P."/>
        </authorList>
    </citation>
    <scope>NUCLEOTIDE SEQUENCE [LARGE SCALE GENOMIC DNA]</scope>
    <source>
        <strain>DSM 4184 / JCM 9189 / GEO3</strain>
    </source>
</reference>
<accession>A1RS21</accession>
<keyword id="KW-0687">Ribonucleoprotein</keyword>
<keyword id="KW-0689">Ribosomal protein</keyword>
<comment type="subunit">
    <text evidence="1">Part of the 30S ribosomal subunit.</text>
</comment>
<comment type="similarity">
    <text evidence="1">Belongs to the eukaryotic ribosomal protein eS8 family.</text>
</comment>
<gene>
    <name evidence="1" type="primary">rps8e</name>
    <name type="ordered locus">Pisl_0575</name>
</gene>